<dbReference type="EMBL" id="AF222894">
    <property type="protein sequence ID" value="AAF30469.1"/>
    <property type="molecule type" value="Genomic_DNA"/>
</dbReference>
<dbReference type="RefSeq" id="WP_006688619.1">
    <property type="nucleotide sequence ID" value="NC_002162.1"/>
</dbReference>
<dbReference type="SMR" id="Q9PR81"/>
<dbReference type="STRING" id="273119.UU064"/>
<dbReference type="EnsemblBacteria" id="AAF30469">
    <property type="protein sequence ID" value="AAF30469"/>
    <property type="gene ID" value="UU064"/>
</dbReference>
<dbReference type="GeneID" id="29672178"/>
<dbReference type="KEGG" id="uur:UU064"/>
<dbReference type="HOGENOM" id="CLU_190052_0_0_14"/>
<dbReference type="OrthoDB" id="9976270at2"/>
<dbReference type="Proteomes" id="UP000000423">
    <property type="component" value="Chromosome"/>
</dbReference>
<dbReference type="GO" id="GO:0016020">
    <property type="term" value="C:membrane"/>
    <property type="evidence" value="ECO:0007669"/>
    <property type="project" value="UniProtKB-SubCell"/>
</dbReference>
<gene>
    <name type="ordered locus">UU064</name>
</gene>
<name>Y064_UREPA</name>
<evidence type="ECO:0000255" key="1"/>
<evidence type="ECO:0000305" key="2"/>
<comment type="subcellular location">
    <subcellularLocation>
        <location evidence="2">Membrane</location>
        <topology evidence="2">Single-pass membrane protein</topology>
    </subcellularLocation>
</comment>
<protein>
    <recommendedName>
        <fullName>Uncharacterized protein UU064</fullName>
    </recommendedName>
</protein>
<feature type="chain" id="PRO_0000220796" description="Uncharacterized protein UU064">
    <location>
        <begin position="1"/>
        <end position="88"/>
    </location>
</feature>
<feature type="transmembrane region" description="Helical" evidence="1">
    <location>
        <begin position="34"/>
        <end position="54"/>
    </location>
</feature>
<sequence length="88" mass="10434">MSDEQKTKLIELKQKVNDLEFELDKIKNEFMMKIIIAVILIFFLTIVGLFYLIINLSRIISLNQKRKSLELKTKELNHEINKIEISLL</sequence>
<reference key="1">
    <citation type="journal article" date="2000" name="Nature">
        <title>The complete sequence of the mucosal pathogen Ureaplasma urealyticum.</title>
        <authorList>
            <person name="Glass J.I."/>
            <person name="Lefkowitz E.J."/>
            <person name="Glass J.S."/>
            <person name="Heiner C.R."/>
            <person name="Chen E.Y."/>
            <person name="Cassell G.H."/>
        </authorList>
    </citation>
    <scope>NUCLEOTIDE SEQUENCE [LARGE SCALE GENOMIC DNA]</scope>
    <source>
        <strain>ATCC 700970</strain>
    </source>
</reference>
<proteinExistence type="predicted"/>
<accession>Q9PR81</accession>
<organism>
    <name type="scientific">Ureaplasma parvum serovar 3 (strain ATCC 700970)</name>
    <dbReference type="NCBI Taxonomy" id="273119"/>
    <lineage>
        <taxon>Bacteria</taxon>
        <taxon>Bacillati</taxon>
        <taxon>Mycoplasmatota</taxon>
        <taxon>Mycoplasmoidales</taxon>
        <taxon>Mycoplasmoidaceae</taxon>
        <taxon>Ureaplasma</taxon>
    </lineage>
</organism>
<keyword id="KW-0472">Membrane</keyword>
<keyword id="KW-1185">Reference proteome</keyword>
<keyword id="KW-0812">Transmembrane</keyword>
<keyword id="KW-1133">Transmembrane helix</keyword>